<dbReference type="EC" id="2.1.1.45" evidence="1"/>
<dbReference type="EMBL" id="CP000282">
    <property type="protein sequence ID" value="ABD79614.1"/>
    <property type="molecule type" value="Genomic_DNA"/>
</dbReference>
<dbReference type="RefSeq" id="WP_011466838.1">
    <property type="nucleotide sequence ID" value="NC_007912.1"/>
</dbReference>
<dbReference type="SMR" id="Q21NW5"/>
<dbReference type="STRING" id="203122.Sde_0350"/>
<dbReference type="GeneID" id="98612051"/>
<dbReference type="KEGG" id="sde:Sde_0350"/>
<dbReference type="eggNOG" id="COG0207">
    <property type="taxonomic scope" value="Bacteria"/>
</dbReference>
<dbReference type="HOGENOM" id="CLU_021669_0_0_6"/>
<dbReference type="OrthoDB" id="9774633at2"/>
<dbReference type="UniPathway" id="UPA00575"/>
<dbReference type="Proteomes" id="UP000001947">
    <property type="component" value="Chromosome"/>
</dbReference>
<dbReference type="GO" id="GO:0005829">
    <property type="term" value="C:cytosol"/>
    <property type="evidence" value="ECO:0007669"/>
    <property type="project" value="TreeGrafter"/>
</dbReference>
<dbReference type="GO" id="GO:0004799">
    <property type="term" value="F:thymidylate synthase activity"/>
    <property type="evidence" value="ECO:0007669"/>
    <property type="project" value="UniProtKB-UniRule"/>
</dbReference>
<dbReference type="GO" id="GO:0006231">
    <property type="term" value="P:dTMP biosynthetic process"/>
    <property type="evidence" value="ECO:0007669"/>
    <property type="project" value="UniProtKB-UniRule"/>
</dbReference>
<dbReference type="GO" id="GO:0006235">
    <property type="term" value="P:dTTP biosynthetic process"/>
    <property type="evidence" value="ECO:0007669"/>
    <property type="project" value="UniProtKB-UniRule"/>
</dbReference>
<dbReference type="GO" id="GO:0032259">
    <property type="term" value="P:methylation"/>
    <property type="evidence" value="ECO:0007669"/>
    <property type="project" value="UniProtKB-KW"/>
</dbReference>
<dbReference type="CDD" id="cd00351">
    <property type="entry name" value="TS_Pyrimidine_HMase"/>
    <property type="match status" value="1"/>
</dbReference>
<dbReference type="FunFam" id="3.30.572.10:FF:000013">
    <property type="entry name" value="Thymidylate synthase"/>
    <property type="match status" value="1"/>
</dbReference>
<dbReference type="Gene3D" id="3.30.572.10">
    <property type="entry name" value="Thymidylate synthase/dCMP hydroxymethylase domain"/>
    <property type="match status" value="1"/>
</dbReference>
<dbReference type="HAMAP" id="MF_00008">
    <property type="entry name" value="Thymidy_synth_bact"/>
    <property type="match status" value="1"/>
</dbReference>
<dbReference type="InterPro" id="IPR045097">
    <property type="entry name" value="Thymidate_synth/dCMP_Mease"/>
</dbReference>
<dbReference type="InterPro" id="IPR023451">
    <property type="entry name" value="Thymidate_synth/dCMP_Mease_dom"/>
</dbReference>
<dbReference type="InterPro" id="IPR036926">
    <property type="entry name" value="Thymidate_synth/dCMP_Mease_sf"/>
</dbReference>
<dbReference type="InterPro" id="IPR000398">
    <property type="entry name" value="Thymidylate_synthase"/>
</dbReference>
<dbReference type="NCBIfam" id="NF002497">
    <property type="entry name" value="PRK01827.1-3"/>
    <property type="match status" value="1"/>
</dbReference>
<dbReference type="NCBIfam" id="NF002499">
    <property type="entry name" value="PRK01827.1-5"/>
    <property type="match status" value="1"/>
</dbReference>
<dbReference type="NCBIfam" id="TIGR03284">
    <property type="entry name" value="thym_sym"/>
    <property type="match status" value="2"/>
</dbReference>
<dbReference type="PANTHER" id="PTHR11548:SF9">
    <property type="entry name" value="THYMIDYLATE SYNTHASE"/>
    <property type="match status" value="1"/>
</dbReference>
<dbReference type="PANTHER" id="PTHR11548">
    <property type="entry name" value="THYMIDYLATE SYNTHASE 1"/>
    <property type="match status" value="1"/>
</dbReference>
<dbReference type="Pfam" id="PF00303">
    <property type="entry name" value="Thymidylat_synt"/>
    <property type="match status" value="1"/>
</dbReference>
<dbReference type="PRINTS" id="PR00108">
    <property type="entry name" value="THYMDSNTHASE"/>
</dbReference>
<dbReference type="SUPFAM" id="SSF55831">
    <property type="entry name" value="Thymidylate synthase/dCMP hydroxymethylase"/>
    <property type="match status" value="1"/>
</dbReference>
<feature type="chain" id="PRO_1000000665" description="Thymidylate synthase">
    <location>
        <begin position="1"/>
        <end position="277"/>
    </location>
</feature>
<feature type="active site" description="Nucleophile" evidence="1">
    <location>
        <position position="159"/>
    </location>
</feature>
<feature type="binding site" description="in other chain" evidence="1">
    <location>
        <position position="21"/>
    </location>
    <ligand>
        <name>dUMP</name>
        <dbReference type="ChEBI" id="CHEBI:246422"/>
        <note>ligand shared between dimeric partners</note>
    </ligand>
</feature>
<feature type="binding site" evidence="1">
    <location>
        <position position="51"/>
    </location>
    <ligand>
        <name>(6R)-5,10-methylene-5,6,7,8-tetrahydrofolate</name>
        <dbReference type="ChEBI" id="CHEBI:15636"/>
    </ligand>
</feature>
<feature type="binding site" evidence="1">
    <location>
        <begin position="126"/>
        <end position="127"/>
    </location>
    <ligand>
        <name>dUMP</name>
        <dbReference type="ChEBI" id="CHEBI:246422"/>
        <note>ligand shared between dimeric partners</note>
    </ligand>
</feature>
<feature type="binding site" description="in other chain" evidence="1">
    <location>
        <begin position="179"/>
        <end position="182"/>
    </location>
    <ligand>
        <name>dUMP</name>
        <dbReference type="ChEBI" id="CHEBI:246422"/>
        <note>ligand shared between dimeric partners</note>
    </ligand>
</feature>
<feature type="binding site" evidence="1">
    <location>
        <position position="182"/>
    </location>
    <ligand>
        <name>(6R)-5,10-methylene-5,6,7,8-tetrahydrofolate</name>
        <dbReference type="ChEBI" id="CHEBI:15636"/>
    </ligand>
</feature>
<feature type="binding site" description="in other chain" evidence="1">
    <location>
        <position position="190"/>
    </location>
    <ligand>
        <name>dUMP</name>
        <dbReference type="ChEBI" id="CHEBI:246422"/>
        <note>ligand shared between dimeric partners</note>
    </ligand>
</feature>
<feature type="binding site" description="in other chain" evidence="1">
    <location>
        <begin position="220"/>
        <end position="222"/>
    </location>
    <ligand>
        <name>dUMP</name>
        <dbReference type="ChEBI" id="CHEBI:246422"/>
        <note>ligand shared between dimeric partners</note>
    </ligand>
</feature>
<feature type="binding site" evidence="1">
    <location>
        <position position="276"/>
    </location>
    <ligand>
        <name>(6R)-5,10-methylene-5,6,7,8-tetrahydrofolate</name>
        <dbReference type="ChEBI" id="CHEBI:15636"/>
    </ligand>
</feature>
<proteinExistence type="inferred from homology"/>
<protein>
    <recommendedName>
        <fullName evidence="1">Thymidylate synthase</fullName>
        <shortName evidence="1">TS</shortName>
        <shortName evidence="1">TSase</shortName>
        <ecNumber evidence="1">2.1.1.45</ecNumber>
    </recommendedName>
</protein>
<accession>Q21NW5</accession>
<evidence type="ECO:0000255" key="1">
    <source>
        <dbReference type="HAMAP-Rule" id="MF_00008"/>
    </source>
</evidence>
<keyword id="KW-0963">Cytoplasm</keyword>
<keyword id="KW-0489">Methyltransferase</keyword>
<keyword id="KW-0545">Nucleotide biosynthesis</keyword>
<keyword id="KW-1185">Reference proteome</keyword>
<keyword id="KW-0808">Transferase</keyword>
<gene>
    <name evidence="1" type="primary">thyA</name>
    <name type="ordered locus">Sde_0350</name>
</gene>
<reference key="1">
    <citation type="journal article" date="2008" name="PLoS Genet.">
        <title>Complete genome sequence of the complex carbohydrate-degrading marine bacterium, Saccharophagus degradans strain 2-40 T.</title>
        <authorList>
            <person name="Weiner R.M."/>
            <person name="Taylor L.E. II"/>
            <person name="Henrissat B."/>
            <person name="Hauser L."/>
            <person name="Land M."/>
            <person name="Coutinho P.M."/>
            <person name="Rancurel C."/>
            <person name="Saunders E.H."/>
            <person name="Longmire A.G."/>
            <person name="Zhang H."/>
            <person name="Bayer E.A."/>
            <person name="Gilbert H.J."/>
            <person name="Larimer F."/>
            <person name="Zhulin I.B."/>
            <person name="Ekborg N.A."/>
            <person name="Lamed R."/>
            <person name="Richardson P.M."/>
            <person name="Borovok I."/>
            <person name="Hutcheson S."/>
        </authorList>
    </citation>
    <scope>NUCLEOTIDE SEQUENCE [LARGE SCALE GENOMIC DNA]</scope>
    <source>
        <strain>2-40 / ATCC 43961 / DSM 17024</strain>
    </source>
</reference>
<comment type="function">
    <text evidence="1">Catalyzes the reductive methylation of 2'-deoxyuridine-5'-monophosphate (dUMP) to 2'-deoxythymidine-5'-monophosphate (dTMP) while utilizing 5,10-methylenetetrahydrofolate (mTHF) as the methyl donor and reductant in the reaction, yielding dihydrofolate (DHF) as a by-product. This enzymatic reaction provides an intracellular de novo source of dTMP, an essential precursor for DNA biosynthesis.</text>
</comment>
<comment type="catalytic activity">
    <reaction evidence="1">
        <text>dUMP + (6R)-5,10-methylene-5,6,7,8-tetrahydrofolate = 7,8-dihydrofolate + dTMP</text>
        <dbReference type="Rhea" id="RHEA:12104"/>
        <dbReference type="ChEBI" id="CHEBI:15636"/>
        <dbReference type="ChEBI" id="CHEBI:57451"/>
        <dbReference type="ChEBI" id="CHEBI:63528"/>
        <dbReference type="ChEBI" id="CHEBI:246422"/>
        <dbReference type="EC" id="2.1.1.45"/>
    </reaction>
</comment>
<comment type="pathway">
    <text evidence="1">Pyrimidine metabolism; dTTP biosynthesis.</text>
</comment>
<comment type="subunit">
    <text evidence="1">Homodimer.</text>
</comment>
<comment type="subcellular location">
    <subcellularLocation>
        <location evidence="1">Cytoplasm</location>
    </subcellularLocation>
</comment>
<comment type="similarity">
    <text evidence="1">Belongs to the thymidylate synthase family. Bacterial-type ThyA subfamily.</text>
</comment>
<name>TYSY_SACD2</name>
<organism>
    <name type="scientific">Saccharophagus degradans (strain 2-40 / ATCC 43961 / DSM 17024)</name>
    <dbReference type="NCBI Taxonomy" id="203122"/>
    <lineage>
        <taxon>Bacteria</taxon>
        <taxon>Pseudomonadati</taxon>
        <taxon>Pseudomonadota</taxon>
        <taxon>Gammaproteobacteria</taxon>
        <taxon>Cellvibrionales</taxon>
        <taxon>Cellvibrionaceae</taxon>
        <taxon>Saccharophagus</taxon>
    </lineage>
</organism>
<sequence>MKQYLDLMRHVRDTGTKKEDRTGTGTVSVFGYQMRFDLSEGFPLVTTKKCHLKSIIHELLWFLKGETNTQYLTDNGVRIWNEWATEEGDLGPVYGAQWRSWPTPDGGSLDQFALLVEQIKNKPDSRRHIISAWNPALLPDEGVSPQDNVRNGKMALPPCHTLFQFYVADNKLSCQLYQRSADIFLGVPFNIASYALLTMMVAQVTGLELGDFVHTFGDAHLYLNHLEQVETQLAREPLPLPTMKINPEVKDIFSFKFEDFELVDYQAHPHISAPISI</sequence>